<feature type="chain" id="PRO_0000223163" description="UPF0329 protein ECU06_0080">
    <location>
        <begin position="1"/>
        <end position="580"/>
    </location>
</feature>
<feature type="region of interest" description="Disordered" evidence="1">
    <location>
        <begin position="308"/>
        <end position="384"/>
    </location>
</feature>
<feature type="compositionally biased region" description="Basic and acidic residues" evidence="1">
    <location>
        <begin position="308"/>
        <end position="330"/>
    </location>
</feature>
<feature type="compositionally biased region" description="Basic residues" evidence="1">
    <location>
        <begin position="331"/>
        <end position="340"/>
    </location>
</feature>
<feature type="compositionally biased region" description="Acidic residues" evidence="1">
    <location>
        <begin position="351"/>
        <end position="363"/>
    </location>
</feature>
<feature type="compositionally biased region" description="Basic residues" evidence="1">
    <location>
        <begin position="372"/>
        <end position="384"/>
    </location>
</feature>
<protein>
    <recommendedName>
        <fullName>UPF0329 protein ECU06_0080</fullName>
    </recommendedName>
</protein>
<organism>
    <name type="scientific">Encephalitozoon cuniculi (strain GB-M1)</name>
    <name type="common">Microsporidian parasite</name>
    <dbReference type="NCBI Taxonomy" id="284813"/>
    <lineage>
        <taxon>Eukaryota</taxon>
        <taxon>Fungi</taxon>
        <taxon>Fungi incertae sedis</taxon>
        <taxon>Microsporidia</taxon>
        <taxon>Unikaryonidae</taxon>
        <taxon>Encephalitozoon</taxon>
    </lineage>
</organism>
<comment type="similarity">
    <text evidence="2">Belongs to the UPF0329 family.</text>
</comment>
<dbReference type="EMBL" id="AL590446">
    <property type="protein sequence ID" value="CAD25368.1"/>
    <property type="molecule type" value="Genomic_DNA"/>
</dbReference>
<dbReference type="RefSeq" id="NP_585764.1">
    <property type="nucleotide sequence ID" value="NM_001041386.1"/>
</dbReference>
<dbReference type="SMR" id="Q8SVF4"/>
<dbReference type="STRING" id="284813.Q8SVF4"/>
<dbReference type="GeneID" id="859187"/>
<dbReference type="KEGG" id="ecu:ECU06_0080"/>
<dbReference type="VEuPathDB" id="MicrosporidiaDB:ECU06_0080"/>
<dbReference type="HOGENOM" id="CLU_035434_0_0_1"/>
<dbReference type="InParanoid" id="Q8SVF4"/>
<dbReference type="OrthoDB" id="2162691at2759"/>
<dbReference type="Proteomes" id="UP000000819">
    <property type="component" value="Chromosome VI"/>
</dbReference>
<dbReference type="InterPro" id="IPR022115">
    <property type="entry name" value="DUF3654"/>
</dbReference>
<dbReference type="InterPro" id="IPR011667">
    <property type="entry name" value="UPF0329"/>
</dbReference>
<dbReference type="Pfam" id="PF07753">
    <property type="entry name" value="DUF1609"/>
    <property type="match status" value="1"/>
</dbReference>
<dbReference type="Pfam" id="PF12376">
    <property type="entry name" value="DUF3654"/>
    <property type="match status" value="1"/>
</dbReference>
<reference key="1">
    <citation type="journal article" date="2001" name="Nature">
        <title>Genome sequence and gene compaction of the eukaryote parasite Encephalitozoon cuniculi.</title>
        <authorList>
            <person name="Katinka M.D."/>
            <person name="Duprat S."/>
            <person name="Cornillot E."/>
            <person name="Metenier G."/>
            <person name="Thomarat F."/>
            <person name="Prensier G."/>
            <person name="Barbe V."/>
            <person name="Peyretaillade E."/>
            <person name="Brottier P."/>
            <person name="Wincker P."/>
            <person name="Delbac F."/>
            <person name="El Alaoui H."/>
            <person name="Peyret P."/>
            <person name="Saurin W."/>
            <person name="Gouy M."/>
            <person name="Weissenbach J."/>
            <person name="Vivares C.P."/>
        </authorList>
    </citation>
    <scope>NUCLEOTIDE SEQUENCE [LARGE SCALE GENOMIC DNA]</scope>
    <source>
        <strain>GB-M1</strain>
    </source>
</reference>
<name>Y608_ENCCU</name>
<gene>
    <name type="ordered locus">ECU06_0080</name>
</gene>
<proteinExistence type="inferred from homology"/>
<keyword id="KW-1185">Reference proteome</keyword>
<evidence type="ECO:0000256" key="1">
    <source>
        <dbReference type="SAM" id="MobiDB-lite"/>
    </source>
</evidence>
<evidence type="ECO:0000305" key="2"/>
<sequence length="580" mass="67236">MRWKHGGPWVLIIIYNMIHHCSSGLERIVSFKLEPGSQVIVFPFIFEGYNIIALPTTKYSDLKKNPKDMKSLTPFFFNASHIIWDFAIGSVIRTPDNRFERLFNERMEGYLKDISVNVLKMYVKGNKTISELLEAVYERIFRCDEKGGGHMMKYIEDVIKGFDDMIENVPTEMDSERKEIYHRFWSGSRKYVESFYSIERLKHLVELEKMVCSACREICLGLKEEKLMGLFAEGSMRKALKAKLGEEEASRRGYLEYAIINDEILLDAHREHTGEVTKELVMQMLLGKNGEEIDRRYIGKVANVVKERQKRREREMEKSMKELLRDEEKAKSKKGRKKKSVGVSETKKEESETEEVEASEEMEISSVEVGGARRKTGKKSKGGRKCFKIHRRVLRWRKSPEKIKEELDRGREERWRGKSLEYIKEQKVLHDIAGVLELLRSEDADKFFMDTGEHSKGGSSRRRLMAIGVLEVGRRRMTGVVEAGTFKDSSGCTVLYHLMFRVTGIEEIGSVMSPEFAEANDIEKIDEDEECQDAGKFVYPKGVRFETVKDDDAFQIVWRNPSDTSEVLQGLTIQRRPYVI</sequence>
<accession>Q8SVF4</accession>